<keyword id="KW-0028">Amino-acid biosynthesis</keyword>
<keyword id="KW-0368">Histidine biosynthesis</keyword>
<keyword id="KW-0378">Hydrolase</keyword>
<keyword id="KW-0486">Methionine biosynthesis</keyword>
<keyword id="KW-0511">Multifunctional enzyme</keyword>
<keyword id="KW-0521">NADP</keyword>
<keyword id="KW-0554">One-carbon metabolism</keyword>
<keyword id="KW-0560">Oxidoreductase</keyword>
<keyword id="KW-0658">Purine biosynthesis</keyword>
<feature type="chain" id="PRO_1000147518" description="Bifunctional protein FolD">
    <location>
        <begin position="1"/>
        <end position="288"/>
    </location>
</feature>
<feature type="binding site" evidence="1">
    <location>
        <begin position="166"/>
        <end position="168"/>
    </location>
    <ligand>
        <name>NADP(+)</name>
        <dbReference type="ChEBI" id="CHEBI:58349"/>
    </ligand>
</feature>
<feature type="binding site" evidence="1">
    <location>
        <position position="232"/>
    </location>
    <ligand>
        <name>NADP(+)</name>
        <dbReference type="ChEBI" id="CHEBI:58349"/>
    </ligand>
</feature>
<sequence>MAAKIIDGKTIAQQVRSEVAQKVQARVAAGLRAPGLAVVLVGSNPASQIYVASKRKACDEVGFVSRSYDLPETTSEAELLALIDTLNADNTIDGILVQLPLPAGIDNVKVLERIAPDKDVDGFHPYNVGRLCQRAPRLRPCTPRGIVTLLERYNIDTYGLNAVVIGASNIVGRPMSMELLLAGCTTTVTHRFTKDLRHHVEHADLLIVAVGKPGFIPGEWIKEGAIVIDVGINRLENGKIVGDVVFDEAAARASYITPVPGGVGPMTVATLIENTLQACIEYHDPQGK</sequence>
<evidence type="ECO:0000255" key="1">
    <source>
        <dbReference type="HAMAP-Rule" id="MF_01576"/>
    </source>
</evidence>
<organism>
    <name type="scientific">Salmonella enteritidis PT4 (strain P125109)</name>
    <dbReference type="NCBI Taxonomy" id="550537"/>
    <lineage>
        <taxon>Bacteria</taxon>
        <taxon>Pseudomonadati</taxon>
        <taxon>Pseudomonadota</taxon>
        <taxon>Gammaproteobacteria</taxon>
        <taxon>Enterobacterales</taxon>
        <taxon>Enterobacteriaceae</taxon>
        <taxon>Salmonella</taxon>
    </lineage>
</organism>
<dbReference type="EC" id="1.5.1.5" evidence="1"/>
<dbReference type="EC" id="3.5.4.9" evidence="1"/>
<dbReference type="EMBL" id="AM933172">
    <property type="protein sequence ID" value="CAR32108.1"/>
    <property type="molecule type" value="Genomic_DNA"/>
</dbReference>
<dbReference type="RefSeq" id="WP_000729164.1">
    <property type="nucleotide sequence ID" value="NC_011294.1"/>
</dbReference>
<dbReference type="SMR" id="B5QUV5"/>
<dbReference type="KEGG" id="set:SEN0523"/>
<dbReference type="HOGENOM" id="CLU_034045_2_1_6"/>
<dbReference type="UniPathway" id="UPA00193"/>
<dbReference type="Proteomes" id="UP000000613">
    <property type="component" value="Chromosome"/>
</dbReference>
<dbReference type="GO" id="GO:0005829">
    <property type="term" value="C:cytosol"/>
    <property type="evidence" value="ECO:0007669"/>
    <property type="project" value="TreeGrafter"/>
</dbReference>
<dbReference type="GO" id="GO:0004477">
    <property type="term" value="F:methenyltetrahydrofolate cyclohydrolase activity"/>
    <property type="evidence" value="ECO:0007669"/>
    <property type="project" value="UniProtKB-UniRule"/>
</dbReference>
<dbReference type="GO" id="GO:0004488">
    <property type="term" value="F:methylenetetrahydrofolate dehydrogenase (NADP+) activity"/>
    <property type="evidence" value="ECO:0007669"/>
    <property type="project" value="UniProtKB-UniRule"/>
</dbReference>
<dbReference type="GO" id="GO:0000105">
    <property type="term" value="P:L-histidine biosynthetic process"/>
    <property type="evidence" value="ECO:0007669"/>
    <property type="project" value="UniProtKB-KW"/>
</dbReference>
<dbReference type="GO" id="GO:0009086">
    <property type="term" value="P:methionine biosynthetic process"/>
    <property type="evidence" value="ECO:0007669"/>
    <property type="project" value="UniProtKB-KW"/>
</dbReference>
<dbReference type="GO" id="GO:0006164">
    <property type="term" value="P:purine nucleotide biosynthetic process"/>
    <property type="evidence" value="ECO:0007669"/>
    <property type="project" value="UniProtKB-KW"/>
</dbReference>
<dbReference type="GO" id="GO:0035999">
    <property type="term" value="P:tetrahydrofolate interconversion"/>
    <property type="evidence" value="ECO:0007669"/>
    <property type="project" value="UniProtKB-UniRule"/>
</dbReference>
<dbReference type="CDD" id="cd01080">
    <property type="entry name" value="NAD_bind_m-THF_DH_Cyclohyd"/>
    <property type="match status" value="1"/>
</dbReference>
<dbReference type="FunFam" id="3.40.50.10860:FF:000001">
    <property type="entry name" value="Bifunctional protein FolD"/>
    <property type="match status" value="1"/>
</dbReference>
<dbReference type="FunFam" id="3.40.50.720:FF:000006">
    <property type="entry name" value="Bifunctional protein FolD"/>
    <property type="match status" value="1"/>
</dbReference>
<dbReference type="Gene3D" id="3.40.50.10860">
    <property type="entry name" value="Leucine Dehydrogenase, chain A, domain 1"/>
    <property type="match status" value="1"/>
</dbReference>
<dbReference type="Gene3D" id="3.40.50.720">
    <property type="entry name" value="NAD(P)-binding Rossmann-like Domain"/>
    <property type="match status" value="1"/>
</dbReference>
<dbReference type="HAMAP" id="MF_01576">
    <property type="entry name" value="THF_DHG_CYH"/>
    <property type="match status" value="1"/>
</dbReference>
<dbReference type="InterPro" id="IPR046346">
    <property type="entry name" value="Aminoacid_DH-like_N_sf"/>
</dbReference>
<dbReference type="InterPro" id="IPR036291">
    <property type="entry name" value="NAD(P)-bd_dom_sf"/>
</dbReference>
<dbReference type="InterPro" id="IPR000672">
    <property type="entry name" value="THF_DH/CycHdrlase"/>
</dbReference>
<dbReference type="InterPro" id="IPR020630">
    <property type="entry name" value="THF_DH/CycHdrlase_cat_dom"/>
</dbReference>
<dbReference type="InterPro" id="IPR020867">
    <property type="entry name" value="THF_DH/CycHdrlase_CS"/>
</dbReference>
<dbReference type="InterPro" id="IPR020631">
    <property type="entry name" value="THF_DH/CycHdrlase_NAD-bd_dom"/>
</dbReference>
<dbReference type="NCBIfam" id="NF008058">
    <property type="entry name" value="PRK10792.1"/>
    <property type="match status" value="1"/>
</dbReference>
<dbReference type="NCBIfam" id="NF010783">
    <property type="entry name" value="PRK14186.1"/>
    <property type="match status" value="1"/>
</dbReference>
<dbReference type="PANTHER" id="PTHR48099:SF5">
    <property type="entry name" value="C-1-TETRAHYDROFOLATE SYNTHASE, CYTOPLASMIC"/>
    <property type="match status" value="1"/>
</dbReference>
<dbReference type="PANTHER" id="PTHR48099">
    <property type="entry name" value="C-1-TETRAHYDROFOLATE SYNTHASE, CYTOPLASMIC-RELATED"/>
    <property type="match status" value="1"/>
</dbReference>
<dbReference type="Pfam" id="PF00763">
    <property type="entry name" value="THF_DHG_CYH"/>
    <property type="match status" value="1"/>
</dbReference>
<dbReference type="Pfam" id="PF02882">
    <property type="entry name" value="THF_DHG_CYH_C"/>
    <property type="match status" value="1"/>
</dbReference>
<dbReference type="PRINTS" id="PR00085">
    <property type="entry name" value="THFDHDRGNASE"/>
</dbReference>
<dbReference type="SUPFAM" id="SSF53223">
    <property type="entry name" value="Aminoacid dehydrogenase-like, N-terminal domain"/>
    <property type="match status" value="1"/>
</dbReference>
<dbReference type="SUPFAM" id="SSF51735">
    <property type="entry name" value="NAD(P)-binding Rossmann-fold domains"/>
    <property type="match status" value="1"/>
</dbReference>
<dbReference type="PROSITE" id="PS00766">
    <property type="entry name" value="THF_DHG_CYH_1"/>
    <property type="match status" value="1"/>
</dbReference>
<dbReference type="PROSITE" id="PS00767">
    <property type="entry name" value="THF_DHG_CYH_2"/>
    <property type="match status" value="1"/>
</dbReference>
<reference key="1">
    <citation type="journal article" date="2008" name="Genome Res.">
        <title>Comparative genome analysis of Salmonella enteritidis PT4 and Salmonella gallinarum 287/91 provides insights into evolutionary and host adaptation pathways.</title>
        <authorList>
            <person name="Thomson N.R."/>
            <person name="Clayton D.J."/>
            <person name="Windhorst D."/>
            <person name="Vernikos G."/>
            <person name="Davidson S."/>
            <person name="Churcher C."/>
            <person name="Quail M.A."/>
            <person name="Stevens M."/>
            <person name="Jones M.A."/>
            <person name="Watson M."/>
            <person name="Barron A."/>
            <person name="Layton A."/>
            <person name="Pickard D."/>
            <person name="Kingsley R.A."/>
            <person name="Bignell A."/>
            <person name="Clark L."/>
            <person name="Harris B."/>
            <person name="Ormond D."/>
            <person name="Abdellah Z."/>
            <person name="Brooks K."/>
            <person name="Cherevach I."/>
            <person name="Chillingworth T."/>
            <person name="Woodward J."/>
            <person name="Norberczak H."/>
            <person name="Lord A."/>
            <person name="Arrowsmith C."/>
            <person name="Jagels K."/>
            <person name="Moule S."/>
            <person name="Mungall K."/>
            <person name="Saunders M."/>
            <person name="Whitehead S."/>
            <person name="Chabalgoity J.A."/>
            <person name="Maskell D."/>
            <person name="Humphreys T."/>
            <person name="Roberts M."/>
            <person name="Barrow P.A."/>
            <person name="Dougan G."/>
            <person name="Parkhill J."/>
        </authorList>
    </citation>
    <scope>NUCLEOTIDE SEQUENCE [LARGE SCALE GENOMIC DNA]</scope>
    <source>
        <strain>P125109</strain>
    </source>
</reference>
<gene>
    <name evidence="1" type="primary">folD</name>
    <name type="ordered locus">SEN0523</name>
</gene>
<name>FOLD_SALEP</name>
<accession>B5QUV5</accession>
<proteinExistence type="inferred from homology"/>
<protein>
    <recommendedName>
        <fullName evidence="1">Bifunctional protein FolD</fullName>
    </recommendedName>
    <domain>
        <recommendedName>
            <fullName evidence="1">Methylenetetrahydrofolate dehydrogenase</fullName>
            <ecNumber evidence="1">1.5.1.5</ecNumber>
        </recommendedName>
    </domain>
    <domain>
        <recommendedName>
            <fullName evidence="1">Methenyltetrahydrofolate cyclohydrolase</fullName>
            <ecNumber evidence="1">3.5.4.9</ecNumber>
        </recommendedName>
    </domain>
</protein>
<comment type="function">
    <text evidence="1">Catalyzes the oxidation of 5,10-methylenetetrahydrofolate to 5,10-methenyltetrahydrofolate and then the hydrolysis of 5,10-methenyltetrahydrofolate to 10-formyltetrahydrofolate.</text>
</comment>
<comment type="catalytic activity">
    <reaction evidence="1">
        <text>(6R)-5,10-methylene-5,6,7,8-tetrahydrofolate + NADP(+) = (6R)-5,10-methenyltetrahydrofolate + NADPH</text>
        <dbReference type="Rhea" id="RHEA:22812"/>
        <dbReference type="ChEBI" id="CHEBI:15636"/>
        <dbReference type="ChEBI" id="CHEBI:57455"/>
        <dbReference type="ChEBI" id="CHEBI:57783"/>
        <dbReference type="ChEBI" id="CHEBI:58349"/>
        <dbReference type="EC" id="1.5.1.5"/>
    </reaction>
</comment>
<comment type="catalytic activity">
    <reaction evidence="1">
        <text>(6R)-5,10-methenyltetrahydrofolate + H2O = (6R)-10-formyltetrahydrofolate + H(+)</text>
        <dbReference type="Rhea" id="RHEA:23700"/>
        <dbReference type="ChEBI" id="CHEBI:15377"/>
        <dbReference type="ChEBI" id="CHEBI:15378"/>
        <dbReference type="ChEBI" id="CHEBI:57455"/>
        <dbReference type="ChEBI" id="CHEBI:195366"/>
        <dbReference type="EC" id="3.5.4.9"/>
    </reaction>
</comment>
<comment type="pathway">
    <text evidence="1">One-carbon metabolism; tetrahydrofolate interconversion.</text>
</comment>
<comment type="subunit">
    <text evidence="1">Homodimer.</text>
</comment>
<comment type="similarity">
    <text evidence="1">Belongs to the tetrahydrofolate dehydrogenase/cyclohydrolase family.</text>
</comment>